<reference key="1">
    <citation type="journal article" date="2006" name="Proc. Natl. Acad. Sci. U.S.A.">
        <title>Molecular genetic anatomy of inter- and intraserotype variation in the human bacterial pathogen group A Streptococcus.</title>
        <authorList>
            <person name="Beres S.B."/>
            <person name="Richter E.W."/>
            <person name="Nagiec M.J."/>
            <person name="Sumby P."/>
            <person name="Porcella S.F."/>
            <person name="DeLeo F.R."/>
            <person name="Musser J.M."/>
        </authorList>
    </citation>
    <scope>NUCLEOTIDE SEQUENCE [LARGE SCALE GENOMIC DNA]</scope>
    <source>
        <strain>MGAS10750</strain>
    </source>
</reference>
<sequence length="1222" mass="140252">MLFNINEKGEPLVISFAPFLSPEAIKHLQENERCSDQSQKRTAQQIEAIYTSGQNILVSASAGSGKTFVMVERILDKILRGVSIDRLFISTFTVKAATELRERIENKLYSQIAQTTDFQMKVYLTEQLQSLCQADIGTMDAFAQKVVSRYGYSIGISSQFRIMQDKAEQGVLKQEVFSKLFSEFMNQKEAPVFRALVKNFSGNCKDTSAFRELVYTCYSFSQSTENPKIWLQENFLSAAKTYQRLEDIPDHDIELLLLAMQDTANQLRDVTDMEDYGQLTKAGSRSAKYTKHLTIIEKLSDWVRDFKCLYGKAGLDRLIRDVTGLIPSGNYVTVSKVKYPVFKTLHQKLKQFRHLETILMYQKDCFPLLEQLQDFVLAFSEAYLAVKIQESAFEFSDIAHFAIKILEENTDIRQSYQQHYHEVMVDEYQDNNHMQERLLTLLSNGHNRFMVGDIKQSIYRFRQADPQIFNQKFRDYQKKPEQGKVILLKENFRSQSEVLNVSNAVFSHLMDESVGDVLYDEQHQLIAGSHAQTVPYLDRRAQLLLYNSDKDDGNAPSDSEGISFSEVTIVAKEIIKLHNDKGVPFEDITLLVSSRTRNDIISHTFNQYGIPIVTDGGQQNYLKSVEVMVMLDTLRTINNPRNDYALVALLRSPMFAFDEDDLARIALQKDNELDKDCLYDKIQRAVIGRGAHPELIHDTLLGKLNVFLKTLKSWRRYAKLGSLYDLIWKIFNDRFYFDFVASQAKAEQAQANLYALALRANQFEKSGYKGLYRFIKMIDKVLETQNDLADVEVAAPKQAVNLMTIHKSKGLQFPYVFILNCDKRFSMTDIHKSFILNRQHGIGIKYLADIKGLLGETTLNSVKVSMETLPYQLNKQELRLATLSEQMRLLYVAMTRAEKKVYFIGKASKSKSQEITDPKKLDKLLPLALREQLLTFQDWLLAIADIFSTEDLYFDVRFIEDSDLTQESVGRLQTPQLLNPDDLKDNRQSETIARALDMLEAVSQLNANYEAAIHLPTVRTPSQLKAAYEPLLEPIGVDIIEKSSRSLSDFTLPHFSKKAKVEASHIGSALHQLMQVLPLSKPINQQTLLDALRGIDSNEEVKTALDLKKIESFFCDTSLGQFFQTYQKHLYREAPFAILKVDPISQEEYVLRGIIDAYFLFDDHIVLVDYKTDKYKQPIELKKRYQQQLELYAEALTQTYKLPVTKRYLVLMGGGKPEIVEV</sequence>
<gene>
    <name evidence="1" type="primary">addA</name>
    <name type="synonym">rexA</name>
    <name type="ordered locus">MGAS10750_Spy0680</name>
</gene>
<evidence type="ECO:0000255" key="1">
    <source>
        <dbReference type="HAMAP-Rule" id="MF_01451"/>
    </source>
</evidence>
<accession>Q1J7E4</accession>
<proteinExistence type="inferred from homology"/>
<feature type="chain" id="PRO_0000379347" description="ATP-dependent helicase/nuclease subunit A">
    <location>
        <begin position="1"/>
        <end position="1222"/>
    </location>
</feature>
<feature type="domain" description="UvrD-like helicase ATP-binding" evidence="1">
    <location>
        <begin position="39"/>
        <end position="495"/>
    </location>
</feature>
<feature type="domain" description="UvrD-like helicase C-terminal" evidence="1">
    <location>
        <begin position="524"/>
        <end position="810"/>
    </location>
</feature>
<feature type="binding site" evidence="1">
    <location>
        <begin position="60"/>
        <end position="67"/>
    </location>
    <ligand>
        <name>ATP</name>
        <dbReference type="ChEBI" id="CHEBI:30616"/>
    </ligand>
</feature>
<dbReference type="EC" id="3.1.-.-" evidence="1"/>
<dbReference type="EC" id="5.6.2.4" evidence="1"/>
<dbReference type="EMBL" id="CP000262">
    <property type="protein sequence ID" value="ABF37630.1"/>
    <property type="molecule type" value="Genomic_DNA"/>
</dbReference>
<dbReference type="SMR" id="Q1J7E4"/>
<dbReference type="KEGG" id="spi:MGAS10750_Spy0680"/>
<dbReference type="HOGENOM" id="CLU_001114_3_1_9"/>
<dbReference type="Proteomes" id="UP000002434">
    <property type="component" value="Chromosome"/>
</dbReference>
<dbReference type="GO" id="GO:0005829">
    <property type="term" value="C:cytosol"/>
    <property type="evidence" value="ECO:0007669"/>
    <property type="project" value="TreeGrafter"/>
</dbReference>
<dbReference type="GO" id="GO:0033202">
    <property type="term" value="C:DNA helicase complex"/>
    <property type="evidence" value="ECO:0007669"/>
    <property type="project" value="TreeGrafter"/>
</dbReference>
<dbReference type="GO" id="GO:0043138">
    <property type="term" value="F:3'-5' DNA helicase activity"/>
    <property type="evidence" value="ECO:0007669"/>
    <property type="project" value="UniProtKB-UniRule"/>
</dbReference>
<dbReference type="GO" id="GO:0008408">
    <property type="term" value="F:3'-5' exonuclease activity"/>
    <property type="evidence" value="ECO:0007669"/>
    <property type="project" value="UniProtKB-UniRule"/>
</dbReference>
<dbReference type="GO" id="GO:0005524">
    <property type="term" value="F:ATP binding"/>
    <property type="evidence" value="ECO:0007669"/>
    <property type="project" value="UniProtKB-UniRule"/>
</dbReference>
<dbReference type="GO" id="GO:0016887">
    <property type="term" value="F:ATP hydrolysis activity"/>
    <property type="evidence" value="ECO:0007669"/>
    <property type="project" value="RHEA"/>
</dbReference>
<dbReference type="GO" id="GO:0003690">
    <property type="term" value="F:double-stranded DNA binding"/>
    <property type="evidence" value="ECO:0007669"/>
    <property type="project" value="UniProtKB-UniRule"/>
</dbReference>
<dbReference type="GO" id="GO:0000724">
    <property type="term" value="P:double-strand break repair via homologous recombination"/>
    <property type="evidence" value="ECO:0007669"/>
    <property type="project" value="UniProtKB-UniRule"/>
</dbReference>
<dbReference type="CDD" id="cd17932">
    <property type="entry name" value="DEXQc_UvrD"/>
    <property type="match status" value="1"/>
</dbReference>
<dbReference type="Gene3D" id="3.90.320.10">
    <property type="match status" value="1"/>
</dbReference>
<dbReference type="Gene3D" id="3.40.50.300">
    <property type="entry name" value="P-loop containing nucleotide triphosphate hydrolases"/>
    <property type="match status" value="4"/>
</dbReference>
<dbReference type="Gene3D" id="1.10.486.10">
    <property type="entry name" value="PCRA, domain 4"/>
    <property type="match status" value="1"/>
</dbReference>
<dbReference type="HAMAP" id="MF_01451">
    <property type="entry name" value="AddA"/>
    <property type="match status" value="1"/>
</dbReference>
<dbReference type="InterPro" id="IPR014152">
    <property type="entry name" value="AddA"/>
</dbReference>
<dbReference type="InterPro" id="IPR014017">
    <property type="entry name" value="DNA_helicase_UvrD-like_C"/>
</dbReference>
<dbReference type="InterPro" id="IPR000212">
    <property type="entry name" value="DNA_helicase_UvrD/REP"/>
</dbReference>
<dbReference type="InterPro" id="IPR027417">
    <property type="entry name" value="P-loop_NTPase"/>
</dbReference>
<dbReference type="InterPro" id="IPR011604">
    <property type="entry name" value="PDDEXK-like_dom_sf"/>
</dbReference>
<dbReference type="InterPro" id="IPR038726">
    <property type="entry name" value="PDDEXK_AddAB-type"/>
</dbReference>
<dbReference type="InterPro" id="IPR011335">
    <property type="entry name" value="Restrct_endonuc-II-like"/>
</dbReference>
<dbReference type="InterPro" id="IPR014016">
    <property type="entry name" value="UvrD-like_ATP-bd"/>
</dbReference>
<dbReference type="NCBIfam" id="TIGR02785">
    <property type="entry name" value="addA_Gpos"/>
    <property type="match status" value="1"/>
</dbReference>
<dbReference type="PANTHER" id="PTHR11070:SF48">
    <property type="entry name" value="ATP-DEPENDENT HELICASE_NUCLEASE SUBUNIT A"/>
    <property type="match status" value="1"/>
</dbReference>
<dbReference type="PANTHER" id="PTHR11070">
    <property type="entry name" value="UVRD / RECB / PCRA DNA HELICASE FAMILY MEMBER"/>
    <property type="match status" value="1"/>
</dbReference>
<dbReference type="Pfam" id="PF12705">
    <property type="entry name" value="PDDEXK_1"/>
    <property type="match status" value="1"/>
</dbReference>
<dbReference type="Pfam" id="PF00580">
    <property type="entry name" value="UvrD-helicase"/>
    <property type="match status" value="1"/>
</dbReference>
<dbReference type="Pfam" id="PF13361">
    <property type="entry name" value="UvrD_C"/>
    <property type="match status" value="1"/>
</dbReference>
<dbReference type="SUPFAM" id="SSF52540">
    <property type="entry name" value="P-loop containing nucleoside triphosphate hydrolases"/>
    <property type="match status" value="1"/>
</dbReference>
<dbReference type="SUPFAM" id="SSF52980">
    <property type="entry name" value="Restriction endonuclease-like"/>
    <property type="match status" value="1"/>
</dbReference>
<dbReference type="PROSITE" id="PS51198">
    <property type="entry name" value="UVRD_HELICASE_ATP_BIND"/>
    <property type="match status" value="1"/>
</dbReference>
<dbReference type="PROSITE" id="PS51217">
    <property type="entry name" value="UVRD_HELICASE_CTER"/>
    <property type="match status" value="1"/>
</dbReference>
<keyword id="KW-0067">ATP-binding</keyword>
<keyword id="KW-0227">DNA damage</keyword>
<keyword id="KW-0234">DNA repair</keyword>
<keyword id="KW-0238">DNA-binding</keyword>
<keyword id="KW-0269">Exonuclease</keyword>
<keyword id="KW-0347">Helicase</keyword>
<keyword id="KW-0378">Hydrolase</keyword>
<keyword id="KW-0413">Isomerase</keyword>
<keyword id="KW-0540">Nuclease</keyword>
<keyword id="KW-0547">Nucleotide-binding</keyword>
<comment type="function">
    <text evidence="1">The heterodimer acts as both an ATP-dependent DNA helicase and an ATP-dependent, dual-direction single-stranded exonuclease. Recognizes the chi site generating a DNA molecule suitable for the initiation of homologous recombination. The AddA nuclease domain is required for chi fragment generation; this subunit has the helicase and 3' -&gt; 5' nuclease activities.</text>
</comment>
<comment type="catalytic activity">
    <reaction evidence="1">
        <text>Couples ATP hydrolysis with the unwinding of duplex DNA by translocating in the 3'-5' direction.</text>
        <dbReference type="EC" id="5.6.2.4"/>
    </reaction>
</comment>
<comment type="catalytic activity">
    <reaction evidence="1">
        <text>ATP + H2O = ADP + phosphate + H(+)</text>
        <dbReference type="Rhea" id="RHEA:13065"/>
        <dbReference type="ChEBI" id="CHEBI:15377"/>
        <dbReference type="ChEBI" id="CHEBI:15378"/>
        <dbReference type="ChEBI" id="CHEBI:30616"/>
        <dbReference type="ChEBI" id="CHEBI:43474"/>
        <dbReference type="ChEBI" id="CHEBI:456216"/>
        <dbReference type="EC" id="5.6.2.4"/>
    </reaction>
</comment>
<comment type="cofactor">
    <cofactor evidence="1">
        <name>Mg(2+)</name>
        <dbReference type="ChEBI" id="CHEBI:18420"/>
    </cofactor>
</comment>
<comment type="subunit">
    <text evidence="1">Heterodimer of AddA and AddB/RexB.</text>
</comment>
<comment type="similarity">
    <text evidence="1">Belongs to the helicase family. AddA subfamily.</text>
</comment>
<protein>
    <recommendedName>
        <fullName evidence="1">ATP-dependent helicase/nuclease subunit A</fullName>
        <ecNumber evidence="1">3.1.-.-</ecNumber>
        <ecNumber evidence="1">5.6.2.4</ecNumber>
    </recommendedName>
    <alternativeName>
        <fullName evidence="1">ATP-dependent helicase/nuclease AddA</fullName>
    </alternativeName>
    <alternativeName>
        <fullName evidence="1">DNA 3'-5' helicase AddA</fullName>
    </alternativeName>
</protein>
<organism>
    <name type="scientific">Streptococcus pyogenes serotype M4 (strain MGAS10750)</name>
    <dbReference type="NCBI Taxonomy" id="370554"/>
    <lineage>
        <taxon>Bacteria</taxon>
        <taxon>Bacillati</taxon>
        <taxon>Bacillota</taxon>
        <taxon>Bacilli</taxon>
        <taxon>Lactobacillales</taxon>
        <taxon>Streptococcaceae</taxon>
        <taxon>Streptococcus</taxon>
    </lineage>
</organism>
<name>ADDA_STRPF</name>